<evidence type="ECO:0000250" key="1"/>
<evidence type="ECO:0000250" key="2">
    <source>
        <dbReference type="UniProtKB" id="D7PF45"/>
    </source>
</evidence>
<evidence type="ECO:0000250" key="3">
    <source>
        <dbReference type="UniProtKB" id="O15357"/>
    </source>
</evidence>
<evidence type="ECO:0000250" key="4">
    <source>
        <dbReference type="UniProtKB" id="Q9WVR3"/>
    </source>
</evidence>
<evidence type="ECO:0000255" key="5">
    <source>
        <dbReference type="PROSITE-ProRule" id="PRU00184"/>
    </source>
</evidence>
<evidence type="ECO:0000255" key="6">
    <source>
        <dbReference type="PROSITE-ProRule" id="PRU00191"/>
    </source>
</evidence>
<evidence type="ECO:0000256" key="7">
    <source>
        <dbReference type="SAM" id="MobiDB-lite"/>
    </source>
</evidence>
<evidence type="ECO:0000305" key="8"/>
<gene>
    <name type="primary">inppl1a</name>
    <name type="synonym">ship2a</name>
    <name type="ORF">wu:fc58a04</name>
    <name type="ORF">zgc:198309</name>
</gene>
<keyword id="KW-0009">Actin-binding</keyword>
<keyword id="KW-0130">Cell adhesion</keyword>
<keyword id="KW-0966">Cell projection</keyword>
<keyword id="KW-0963">Cytoplasm</keyword>
<keyword id="KW-0206">Cytoskeleton</keyword>
<keyword id="KW-0378">Hydrolase</keyword>
<keyword id="KW-0391">Immunity</keyword>
<keyword id="KW-0472">Membrane</keyword>
<keyword id="KW-0539">Nucleus</keyword>
<keyword id="KW-0597">Phosphoprotein</keyword>
<keyword id="KW-1185">Reference proteome</keyword>
<keyword id="KW-0727">SH2 domain</keyword>
<accession>Q2I6J1</accession>
<accession>B7ZVH1</accession>
<organism>
    <name type="scientific">Danio rerio</name>
    <name type="common">Zebrafish</name>
    <name type="synonym">Brachydanio rerio</name>
    <dbReference type="NCBI Taxonomy" id="7955"/>
    <lineage>
        <taxon>Eukaryota</taxon>
        <taxon>Metazoa</taxon>
        <taxon>Chordata</taxon>
        <taxon>Craniata</taxon>
        <taxon>Vertebrata</taxon>
        <taxon>Euteleostomi</taxon>
        <taxon>Actinopterygii</taxon>
        <taxon>Neopterygii</taxon>
        <taxon>Teleostei</taxon>
        <taxon>Ostariophysi</taxon>
        <taxon>Cypriniformes</taxon>
        <taxon>Danionidae</taxon>
        <taxon>Danioninae</taxon>
        <taxon>Danio</taxon>
    </lineage>
</organism>
<proteinExistence type="evidence at transcript level"/>
<sequence>MAAVGPASPPPPPLWMHRDLSRAAAEELLARAGRDGSFLVRDSESVSGAYALCVLFQKHVHTYRILPDEENFLAVQTSQGVQPKRFKTLPELIQLYLQPSQGLVTTLLYPVEREETTEDRDYSDGEDEKPPLPPRTASTSSMTGSALVSTDTPPENVTAANGLSTISHEYLKGNYALDLEAVKQGANSLPHLNKTLLSSCKRLHGEVDKVLCGLEILSKVFDQQSASMVSRMIQQSMSQGGDQELEHLVTKLAILKDLLSSIEKKALKALQDMSSSTPAISPLLSIRNKVIPVQTFEVKLDVYLADLTKIGKSQKYSLSVDVEGGKLVVMKKMKDAQEDWNTFTHDKIRQLIKSQRVQNKLGIVFEKEKDKSQRKDFIFASAKKREAFCQLLQLMKNKHSNQDEPDMISIFIGTWNMGSVPAPKPLGSWILSRGLGKTLDEMAVTIPHDIYVFGTQENSVCDKEWVETLRCSLKEYTDMEYKPIAVQTLWNIKIVVLVKAEHENRISHVGMSSVKTGIANTLGNKGAVGVSFMFNGTSFGFVNCHLTSGNEKIHRRNQNYLDILRQLSLGDKQLNSFDISLRFTHLFWFGDLNYRLDMDIQEILNYINRKEFDPLLKVDQLNLEREKNKIFLRFAEEEISYPPTYRYERGSRDTYVWQKQKATGMRTNVPSWCDRILWKSYPETHIVCNSYGCTDDIVTSDHSPVFGTFEVGVTSQFVSKKGLPKSSEQAYIEFENIEAIVKTASRTKFFIEFYSTCLEEFKKSYENDTQSSDNVNFLRVGWSSKQLTTLKPILSDIEYLQDQHLLLTVKSLDGYESYGECVLALKSMIGSTAQQFHTYLSHRGEETGNIRGSMRVRVPSERMGTRERLYEWISVDKDDMGGPKGRTLPPRTSHDYVKPTSSSSSRKHGSAELSRVSEEGEKSSTSRHTHTKEENTHNRGKQDPFESDATTCKNSFNNPAYYILEGVPNQSAALASDILPGSALPPLANKTTAPPAGSVGKSKPPSGSSAQGRWQTSGRSVRPISEEGSSEDDGNIGPHTGSLNRPPPDFPPPPLPKAALEMSENSFGKPRVFSDLADGKIPPPSKPLVSPGLTPPPGGAPGGGVAFCIESPPVLSPNSAPFRRGGGASALDDQSCSVLQMAKTLSEVEYPSGRERGASQGPTGPQLRGLSFPSHPIQEESIAEDLPEEGGLWGAESSSSSLSVDCSVGEWLQKLGLQHYEEGLLHNGWDDLEFLSDITEEDLEEAGVRDPAHKKILLASLKQQQK</sequence>
<feature type="chain" id="PRO_0000302873" description="Phosphatidylinositol 3,4,5-trisphosphate 5-phosphatase 2A">
    <location>
        <begin position="1"/>
        <end position="1266"/>
    </location>
</feature>
<feature type="domain" description="SH2" evidence="6">
    <location>
        <begin position="15"/>
        <end position="111"/>
    </location>
</feature>
<feature type="domain" description="SAM" evidence="5">
    <location>
        <begin position="1203"/>
        <end position="1266"/>
    </location>
</feature>
<feature type="region of interest" description="Disordered" evidence="7">
    <location>
        <begin position="114"/>
        <end position="159"/>
    </location>
</feature>
<feature type="region of interest" description="Disordered" evidence="7">
    <location>
        <begin position="879"/>
        <end position="951"/>
    </location>
</feature>
<feature type="region of interest" description="Disordered" evidence="7">
    <location>
        <begin position="986"/>
        <end position="1132"/>
    </location>
</feature>
<feature type="region of interest" description="Disordered" evidence="7">
    <location>
        <begin position="1147"/>
        <end position="1174"/>
    </location>
</feature>
<feature type="short sequence motif" description="NPXY motif">
    <location>
        <begin position="958"/>
        <end position="961"/>
    </location>
</feature>
<feature type="compositionally biased region" description="Basic and acidic residues" evidence="7">
    <location>
        <begin position="114"/>
        <end position="123"/>
    </location>
</feature>
<feature type="compositionally biased region" description="Polar residues" evidence="7">
    <location>
        <begin position="136"/>
        <end position="159"/>
    </location>
</feature>
<feature type="compositionally biased region" description="Basic and acidic residues" evidence="7">
    <location>
        <begin position="915"/>
        <end position="924"/>
    </location>
</feature>
<feature type="compositionally biased region" description="Basic and acidic residues" evidence="7">
    <location>
        <begin position="931"/>
        <end position="944"/>
    </location>
</feature>
<feature type="compositionally biased region" description="Low complexity" evidence="7">
    <location>
        <begin position="994"/>
        <end position="1012"/>
    </location>
</feature>
<feature type="compositionally biased region" description="Pro residues" evidence="7">
    <location>
        <begin position="1045"/>
        <end position="1056"/>
    </location>
</feature>
<feature type="modified residue" description="Phosphotyrosine" evidence="1">
    <location>
        <position position="961"/>
    </location>
</feature>
<feature type="sequence conflict" description="In Ref. 1; ABB84851." evidence="8" ref="1">
    <original>A</original>
    <variation>T</variation>
    <location>
        <position position="23"/>
    </location>
</feature>
<feature type="sequence conflict" description="In Ref. 1; ABB84851." evidence="8" ref="1">
    <original>L</original>
    <variation>P</variation>
    <location>
        <position position="132"/>
    </location>
</feature>
<feature type="sequence conflict" description="In Ref. 1; ABB84851." evidence="8" ref="1">
    <original>T</original>
    <variation>P</variation>
    <location>
        <position position="929"/>
    </location>
</feature>
<feature type="sequence conflict" description="In Ref. 1; ABB84851." evidence="8" ref="1">
    <original>G</original>
    <variation>V</variation>
    <location>
        <position position="1037"/>
    </location>
</feature>
<name>SHP2A_DANRE</name>
<protein>
    <recommendedName>
        <fullName>Phosphatidylinositol 3,4,5-trisphosphate 5-phosphatase 2A</fullName>
        <ecNumber evidence="3">3.1.3.86</ecNumber>
    </recommendedName>
    <alternativeName>
        <fullName>Inositol polyphosphate phosphatase-like protein 1A</fullName>
        <shortName>INPPL1-A</shortName>
    </alternativeName>
    <alternativeName>
        <fullName>SH2 domain-containing inositol 5'-phosphatase 2A</fullName>
        <shortName>SH2 domain-containing inositol phosphatase 2A</shortName>
        <shortName>SHIP-2A</shortName>
    </alternativeName>
</protein>
<reference key="1">
    <citation type="submission" date="2005-11" db="EMBL/GenBank/DDBJ databases">
        <title>Cloning of 2 ship2 cDNAs in zebrafish.</title>
        <authorList>
            <person name="Jurynec M.J."/>
            <person name="Grunwald D.J."/>
        </authorList>
    </citation>
    <scope>NUCLEOTIDE SEQUENCE [MRNA]</scope>
    <source>
        <strain>AB</strain>
        <tissue>Embryo</tissue>
    </source>
</reference>
<reference key="2">
    <citation type="submission" date="2008-11" db="EMBL/GenBank/DDBJ databases">
        <authorList>
            <consortium name="NIH - Zebrafish Gene Collection (ZGC) project"/>
        </authorList>
    </citation>
    <scope>NUCLEOTIDE SEQUENCE [LARGE SCALE MRNA]</scope>
</reference>
<comment type="function">
    <text evidence="3">Phosphatidylinositol (PtdIns) phosphatase that specifically hydrolyzes the 5-phosphate of phosphatidylinositol-3,4,5-trisphosphate (PtdIns(3,4,5)P3) to produce PtdIns(3,4)P2, thereby negatively regulating the PI3K (phosphoinositide 3-kinase) pathways. Plays a central role in regulation of PI3K-dependent insulin signaling, although the precise molecular mechanisms and signaling pathways remain unclear. Part of a signaling pathway that regulates actin cytoskeleton remodeling. Required for the maintenance and dynamic remodeling of actin structures as well as in endocytosis, having a major impact on ligand-induced EGFR internalization and degradation. Participates in regulation of cortical and submembraneous actin. Regulates cell adhesion and cell spreading. Acts as a negative regulator of the FC-gamma-RIIA receptor (FCGR2A). Mediates signaling from the FC-gamma-RIIB receptor (FCGR2B), playing a central role in terminating signal transduction from activating immune/hematopoietic cell receptor systems. May also hydrolyze PtdIns(1,3,4,5)P4, and could thus affect the levels of the higher inositol polyphosphates like InsP6 (By similarity).</text>
</comment>
<comment type="catalytic activity">
    <reaction evidence="3">
        <text>a 1,2-diacyl-sn-glycero-3-phospho-(1D-myo-inositol-3,4,5-trisphosphate) + H2O = a 1,2-diacyl-sn-glycero-3-phospho-(1D-myo-inositol-3,4-bisphosphate) + phosphate</text>
        <dbReference type="Rhea" id="RHEA:25528"/>
        <dbReference type="ChEBI" id="CHEBI:15377"/>
        <dbReference type="ChEBI" id="CHEBI:43474"/>
        <dbReference type="ChEBI" id="CHEBI:57658"/>
        <dbReference type="ChEBI" id="CHEBI:57836"/>
        <dbReference type="EC" id="3.1.3.86"/>
    </reaction>
    <physiologicalReaction direction="left-to-right" evidence="3">
        <dbReference type="Rhea" id="RHEA:25529"/>
    </physiologicalReaction>
</comment>
<comment type="subcellular location">
    <subcellularLocation>
        <location evidence="4">Cytoplasm</location>
        <location evidence="4">Cytosol</location>
    </subcellularLocation>
    <subcellularLocation>
        <location evidence="3">Cytoplasm</location>
        <location evidence="3">Cytoskeleton</location>
    </subcellularLocation>
    <subcellularLocation>
        <location evidence="4">Membrane</location>
        <topology evidence="1">Peripheral membrane protein</topology>
    </subcellularLocation>
    <subcellularLocation>
        <location evidence="3">Cell projection</location>
        <location evidence="3">Filopodium</location>
    </subcellularLocation>
    <subcellularLocation>
        <location evidence="3">Cell projection</location>
        <location evidence="3">Lamellipodium</location>
    </subcellularLocation>
    <subcellularLocation>
        <location evidence="2">Nucleus</location>
    </subcellularLocation>
    <subcellularLocation>
        <location evidence="2">Nucleus speckle</location>
    </subcellularLocation>
    <text evidence="1">Translocates to membrane ruffles when activated, translocation is probably due to different mechanisms depending on the stimulus and cell type.</text>
</comment>
<comment type="domain">
    <text evidence="3">The SH2 domain interacts with tyrosine phosphorylated forms of proteins.</text>
</comment>
<comment type="domain">
    <text evidence="3">The NPXY sequence motif found in many tyrosine-phosphorylated proteins is required for the specific binding of the PID domain.</text>
</comment>
<comment type="PTM">
    <text evidence="3">Tyrosine phosphorylated by the members of the SRC family after exposure to a diverse array of extracellular stimuli.</text>
</comment>
<comment type="similarity">
    <text evidence="8">Belongs to the inositol 1,4,5-trisphosphate 5-phosphatase family.</text>
</comment>
<dbReference type="EC" id="3.1.3.86" evidence="3"/>
<dbReference type="EMBL" id="DQ272661">
    <property type="protein sequence ID" value="ABB84851.1"/>
    <property type="molecule type" value="mRNA"/>
</dbReference>
<dbReference type="EMBL" id="BC171582">
    <property type="protein sequence ID" value="AAI71582.1"/>
    <property type="molecule type" value="mRNA"/>
</dbReference>
<dbReference type="RefSeq" id="NP_001034893.1">
    <property type="nucleotide sequence ID" value="NM_001039804.2"/>
</dbReference>
<dbReference type="SMR" id="Q2I6J1"/>
<dbReference type="FunCoup" id="Q2I6J1">
    <property type="interactions" value="1531"/>
</dbReference>
<dbReference type="STRING" id="7955.ENSDARP00000129999"/>
<dbReference type="GeneID" id="325179"/>
<dbReference type="KEGG" id="dre:325179"/>
<dbReference type="AGR" id="ZFIN:ZDB-GENE-030131-3904"/>
<dbReference type="CTD" id="325179"/>
<dbReference type="ZFIN" id="ZDB-GENE-030131-3904">
    <property type="gene designation" value="inppl1a"/>
</dbReference>
<dbReference type="eggNOG" id="KOG0565">
    <property type="taxonomic scope" value="Eukaryota"/>
</dbReference>
<dbReference type="eggNOG" id="KOG4384">
    <property type="taxonomic scope" value="Eukaryota"/>
</dbReference>
<dbReference type="InParanoid" id="Q2I6J1"/>
<dbReference type="OrthoDB" id="7862313at2759"/>
<dbReference type="PhylomeDB" id="Q2I6J1"/>
<dbReference type="Reactome" id="R-DRE-1660499">
    <property type="pathway name" value="Synthesis of PIPs at the plasma membrane"/>
</dbReference>
<dbReference type="Reactome" id="R-DRE-1855204">
    <property type="pathway name" value="Synthesis of IP3 and IP4 in the cytosol"/>
</dbReference>
<dbReference type="PRO" id="PR:Q2I6J1"/>
<dbReference type="Proteomes" id="UP000000437">
    <property type="component" value="Chromosome 15"/>
</dbReference>
<dbReference type="GO" id="GO:0005856">
    <property type="term" value="C:cytoskeleton"/>
    <property type="evidence" value="ECO:0007669"/>
    <property type="project" value="UniProtKB-SubCell"/>
</dbReference>
<dbReference type="GO" id="GO:0005829">
    <property type="term" value="C:cytosol"/>
    <property type="evidence" value="ECO:0000318"/>
    <property type="project" value="GO_Central"/>
</dbReference>
<dbReference type="GO" id="GO:0030175">
    <property type="term" value="C:filopodium"/>
    <property type="evidence" value="ECO:0007669"/>
    <property type="project" value="UniProtKB-SubCell"/>
</dbReference>
<dbReference type="GO" id="GO:0030027">
    <property type="term" value="C:lamellipodium"/>
    <property type="evidence" value="ECO:0007669"/>
    <property type="project" value="UniProtKB-SubCell"/>
</dbReference>
<dbReference type="GO" id="GO:0016020">
    <property type="term" value="C:membrane"/>
    <property type="evidence" value="ECO:0007669"/>
    <property type="project" value="UniProtKB-SubCell"/>
</dbReference>
<dbReference type="GO" id="GO:0016607">
    <property type="term" value="C:nuclear speck"/>
    <property type="evidence" value="ECO:0000250"/>
    <property type="project" value="UniProtKB"/>
</dbReference>
<dbReference type="GO" id="GO:0005634">
    <property type="term" value="C:nucleus"/>
    <property type="evidence" value="ECO:0000250"/>
    <property type="project" value="UniProtKB"/>
</dbReference>
<dbReference type="GO" id="GO:0003779">
    <property type="term" value="F:actin binding"/>
    <property type="evidence" value="ECO:0007669"/>
    <property type="project" value="UniProtKB-KW"/>
</dbReference>
<dbReference type="GO" id="GO:0004445">
    <property type="term" value="F:inositol-polyphosphate 5-phosphatase activity"/>
    <property type="evidence" value="ECO:0000318"/>
    <property type="project" value="GO_Central"/>
</dbReference>
<dbReference type="GO" id="GO:0034485">
    <property type="term" value="F:phosphatidylinositol-3,4,5-trisphosphate 5-phosphatase activity"/>
    <property type="evidence" value="ECO:0007669"/>
    <property type="project" value="UniProtKB-EC"/>
</dbReference>
<dbReference type="GO" id="GO:0030509">
    <property type="term" value="P:BMP signaling pathway"/>
    <property type="evidence" value="ECO:0000315"/>
    <property type="project" value="ZFIN"/>
</dbReference>
<dbReference type="GO" id="GO:0007155">
    <property type="term" value="P:cell adhesion"/>
    <property type="evidence" value="ECO:0007669"/>
    <property type="project" value="UniProtKB-KW"/>
</dbReference>
<dbReference type="GO" id="GO:0002376">
    <property type="term" value="P:immune system process"/>
    <property type="evidence" value="ECO:0007669"/>
    <property type="project" value="UniProtKB-KW"/>
</dbReference>
<dbReference type="GO" id="GO:0040037">
    <property type="term" value="P:negative regulation of fibroblast growth factor receptor signaling pathway"/>
    <property type="evidence" value="ECO:0000315"/>
    <property type="project" value="ZFIN"/>
</dbReference>
<dbReference type="GO" id="GO:0043569">
    <property type="term" value="P:negative regulation of insulin-like growth factor receptor signaling pathway"/>
    <property type="evidence" value="ECO:0000318"/>
    <property type="project" value="GO_Central"/>
</dbReference>
<dbReference type="GO" id="GO:0090024">
    <property type="term" value="P:negative regulation of neutrophil chemotaxis"/>
    <property type="evidence" value="ECO:0000316"/>
    <property type="project" value="ZFIN"/>
</dbReference>
<dbReference type="GO" id="GO:0046856">
    <property type="term" value="P:phosphatidylinositol dephosphorylation"/>
    <property type="evidence" value="ECO:0007669"/>
    <property type="project" value="InterPro"/>
</dbReference>
<dbReference type="GO" id="GO:0050776">
    <property type="term" value="P:regulation of immune response"/>
    <property type="evidence" value="ECO:0000318"/>
    <property type="project" value="GO_Central"/>
</dbReference>
<dbReference type="CDD" id="cd09101">
    <property type="entry name" value="INPP5c_SHIP2-INPPL1"/>
    <property type="match status" value="1"/>
</dbReference>
<dbReference type="CDD" id="cd09491">
    <property type="entry name" value="SAM_Ship2"/>
    <property type="match status" value="1"/>
</dbReference>
<dbReference type="FunFam" id="3.30.505.10:FF:000035">
    <property type="entry name" value="phosphatidylinositol 3,4,5-trisphosphate 5-phosphatase 1"/>
    <property type="match status" value="1"/>
</dbReference>
<dbReference type="FunFam" id="3.60.10.10:FF:000005">
    <property type="entry name" value="phosphatidylinositol 3,4,5-trisphosphate 5-phosphatase 1"/>
    <property type="match status" value="1"/>
</dbReference>
<dbReference type="Gene3D" id="3.60.10.10">
    <property type="entry name" value="Endonuclease/exonuclease/phosphatase"/>
    <property type="match status" value="1"/>
</dbReference>
<dbReference type="Gene3D" id="3.30.505.10">
    <property type="entry name" value="SH2 domain"/>
    <property type="match status" value="1"/>
</dbReference>
<dbReference type="Gene3D" id="1.10.150.50">
    <property type="entry name" value="Transcription Factor, Ets-1"/>
    <property type="match status" value="1"/>
</dbReference>
<dbReference type="InterPro" id="IPR036691">
    <property type="entry name" value="Endo/exonu/phosph_ase_sf"/>
</dbReference>
<dbReference type="InterPro" id="IPR000300">
    <property type="entry name" value="IPPc"/>
</dbReference>
<dbReference type="InterPro" id="IPR001660">
    <property type="entry name" value="SAM"/>
</dbReference>
<dbReference type="InterPro" id="IPR013761">
    <property type="entry name" value="SAM/pointed_sf"/>
</dbReference>
<dbReference type="InterPro" id="IPR000980">
    <property type="entry name" value="SH2"/>
</dbReference>
<dbReference type="InterPro" id="IPR036860">
    <property type="entry name" value="SH2_dom_sf"/>
</dbReference>
<dbReference type="PANTHER" id="PTHR46051:SF2">
    <property type="entry name" value="PHOSPHATIDYLINOSITOL 3,4,5-TRISPHOSPHATE 5-PHOSPHATASE 2"/>
    <property type="match status" value="1"/>
</dbReference>
<dbReference type="PANTHER" id="PTHR46051">
    <property type="entry name" value="SH2 DOMAIN-CONTAINING PROTEIN"/>
    <property type="match status" value="1"/>
</dbReference>
<dbReference type="Pfam" id="PF24147">
    <property type="entry name" value="C2_SHIP1-2_2nd"/>
    <property type="match status" value="1"/>
</dbReference>
<dbReference type="Pfam" id="PF24150">
    <property type="entry name" value="C2_SHIP1-2_first"/>
    <property type="match status" value="1"/>
</dbReference>
<dbReference type="Pfam" id="PF22669">
    <property type="entry name" value="Exo_endo_phos2"/>
    <property type="match status" value="1"/>
</dbReference>
<dbReference type="Pfam" id="PF00536">
    <property type="entry name" value="SAM_1"/>
    <property type="match status" value="1"/>
</dbReference>
<dbReference type="Pfam" id="PF00017">
    <property type="entry name" value="SH2"/>
    <property type="match status" value="1"/>
</dbReference>
<dbReference type="PRINTS" id="PR00401">
    <property type="entry name" value="SH2DOMAIN"/>
</dbReference>
<dbReference type="SMART" id="SM00128">
    <property type="entry name" value="IPPc"/>
    <property type="match status" value="1"/>
</dbReference>
<dbReference type="SMART" id="SM00454">
    <property type="entry name" value="SAM"/>
    <property type="match status" value="1"/>
</dbReference>
<dbReference type="SMART" id="SM00252">
    <property type="entry name" value="SH2"/>
    <property type="match status" value="1"/>
</dbReference>
<dbReference type="SUPFAM" id="SSF56219">
    <property type="entry name" value="DNase I-like"/>
    <property type="match status" value="1"/>
</dbReference>
<dbReference type="SUPFAM" id="SSF47769">
    <property type="entry name" value="SAM/Pointed domain"/>
    <property type="match status" value="1"/>
</dbReference>
<dbReference type="SUPFAM" id="SSF55550">
    <property type="entry name" value="SH2 domain"/>
    <property type="match status" value="1"/>
</dbReference>
<dbReference type="PROSITE" id="PS50105">
    <property type="entry name" value="SAM_DOMAIN"/>
    <property type="match status" value="1"/>
</dbReference>
<dbReference type="PROSITE" id="PS50001">
    <property type="entry name" value="SH2"/>
    <property type="match status" value="1"/>
</dbReference>